<accession>Q7UZQ0</accession>
<name>ACP_PROMP</name>
<evidence type="ECO:0000255" key="1">
    <source>
        <dbReference type="HAMAP-Rule" id="MF_01217"/>
    </source>
</evidence>
<evidence type="ECO:0000255" key="2">
    <source>
        <dbReference type="PROSITE-ProRule" id="PRU00258"/>
    </source>
</evidence>
<keyword id="KW-0963">Cytoplasm</keyword>
<keyword id="KW-0275">Fatty acid biosynthesis</keyword>
<keyword id="KW-0276">Fatty acid metabolism</keyword>
<keyword id="KW-0444">Lipid biosynthesis</keyword>
<keyword id="KW-0443">Lipid metabolism</keyword>
<keyword id="KW-0596">Phosphopantetheine</keyword>
<keyword id="KW-0597">Phosphoprotein</keyword>
<proteinExistence type="inferred from homology"/>
<reference key="1">
    <citation type="journal article" date="2003" name="Nature">
        <title>Genome divergence in two Prochlorococcus ecotypes reflects oceanic niche differentiation.</title>
        <authorList>
            <person name="Rocap G."/>
            <person name="Larimer F.W."/>
            <person name="Lamerdin J.E."/>
            <person name="Malfatti S."/>
            <person name="Chain P."/>
            <person name="Ahlgren N.A."/>
            <person name="Arellano A."/>
            <person name="Coleman M."/>
            <person name="Hauser L."/>
            <person name="Hess W.R."/>
            <person name="Johnson Z.I."/>
            <person name="Land M.L."/>
            <person name="Lindell D."/>
            <person name="Post A.F."/>
            <person name="Regala W."/>
            <person name="Shah M."/>
            <person name="Shaw S.L."/>
            <person name="Steglich C."/>
            <person name="Sullivan M.B."/>
            <person name="Ting C.S."/>
            <person name="Tolonen A."/>
            <person name="Webb E.A."/>
            <person name="Zinser E.R."/>
            <person name="Chisholm S.W."/>
        </authorList>
    </citation>
    <scope>NUCLEOTIDE SEQUENCE [LARGE SCALE GENOMIC DNA]</scope>
    <source>
        <strain>CCMP1986 / NIES-2087 / MED4</strain>
    </source>
</reference>
<protein>
    <recommendedName>
        <fullName evidence="1">Acyl carrier protein</fullName>
        <shortName evidence="1">ACP</shortName>
    </recommendedName>
</protein>
<sequence>MSQEEILQKVCSIVSEQLSVESAEVKSDSNFQNDLGADSLDTVELVMALEEAFDIEIPDEAAEGIATVGDAVKFIEEKKG</sequence>
<gene>
    <name evidence="1" type="primary">acpP</name>
    <name type="ordered locus">PMM1608</name>
</gene>
<organism>
    <name type="scientific">Prochlorococcus marinus subsp. pastoris (strain CCMP1986 / NIES-2087 / MED4)</name>
    <dbReference type="NCBI Taxonomy" id="59919"/>
    <lineage>
        <taxon>Bacteria</taxon>
        <taxon>Bacillati</taxon>
        <taxon>Cyanobacteriota</taxon>
        <taxon>Cyanophyceae</taxon>
        <taxon>Synechococcales</taxon>
        <taxon>Prochlorococcaceae</taxon>
        <taxon>Prochlorococcus</taxon>
    </lineage>
</organism>
<dbReference type="EMBL" id="BX548174">
    <property type="protein sequence ID" value="CAE20067.1"/>
    <property type="molecule type" value="Genomic_DNA"/>
</dbReference>
<dbReference type="RefSeq" id="WP_011133235.1">
    <property type="nucleotide sequence ID" value="NC_005072.1"/>
</dbReference>
<dbReference type="SMR" id="Q7UZQ0"/>
<dbReference type="STRING" id="59919.PMM1608"/>
<dbReference type="KEGG" id="pmm:PMM1608"/>
<dbReference type="eggNOG" id="COG0236">
    <property type="taxonomic scope" value="Bacteria"/>
</dbReference>
<dbReference type="HOGENOM" id="CLU_108696_5_1_3"/>
<dbReference type="OrthoDB" id="9804551at2"/>
<dbReference type="UniPathway" id="UPA00094"/>
<dbReference type="Proteomes" id="UP000001026">
    <property type="component" value="Chromosome"/>
</dbReference>
<dbReference type="GO" id="GO:0005829">
    <property type="term" value="C:cytosol"/>
    <property type="evidence" value="ECO:0007669"/>
    <property type="project" value="TreeGrafter"/>
</dbReference>
<dbReference type="GO" id="GO:0016020">
    <property type="term" value="C:membrane"/>
    <property type="evidence" value="ECO:0007669"/>
    <property type="project" value="GOC"/>
</dbReference>
<dbReference type="GO" id="GO:0000035">
    <property type="term" value="F:acyl binding"/>
    <property type="evidence" value="ECO:0007669"/>
    <property type="project" value="TreeGrafter"/>
</dbReference>
<dbReference type="GO" id="GO:0000036">
    <property type="term" value="F:acyl carrier activity"/>
    <property type="evidence" value="ECO:0007669"/>
    <property type="project" value="UniProtKB-UniRule"/>
</dbReference>
<dbReference type="GO" id="GO:0009245">
    <property type="term" value="P:lipid A biosynthetic process"/>
    <property type="evidence" value="ECO:0007669"/>
    <property type="project" value="TreeGrafter"/>
</dbReference>
<dbReference type="FunFam" id="1.10.1200.10:FF:000003">
    <property type="entry name" value="Acyl carrier protein"/>
    <property type="match status" value="1"/>
</dbReference>
<dbReference type="Gene3D" id="1.10.1200.10">
    <property type="entry name" value="ACP-like"/>
    <property type="match status" value="1"/>
</dbReference>
<dbReference type="HAMAP" id="MF_01217">
    <property type="entry name" value="Acyl_carrier"/>
    <property type="match status" value="1"/>
</dbReference>
<dbReference type="InterPro" id="IPR003231">
    <property type="entry name" value="ACP"/>
</dbReference>
<dbReference type="InterPro" id="IPR036736">
    <property type="entry name" value="ACP-like_sf"/>
</dbReference>
<dbReference type="InterPro" id="IPR009081">
    <property type="entry name" value="PP-bd_ACP"/>
</dbReference>
<dbReference type="InterPro" id="IPR006162">
    <property type="entry name" value="Ppantetheine_attach_site"/>
</dbReference>
<dbReference type="NCBIfam" id="TIGR00517">
    <property type="entry name" value="acyl_carrier"/>
    <property type="match status" value="1"/>
</dbReference>
<dbReference type="NCBIfam" id="NF002148">
    <property type="entry name" value="PRK00982.1-2"/>
    <property type="match status" value="1"/>
</dbReference>
<dbReference type="NCBIfam" id="NF002150">
    <property type="entry name" value="PRK00982.1-4"/>
    <property type="match status" value="1"/>
</dbReference>
<dbReference type="NCBIfam" id="NF002151">
    <property type="entry name" value="PRK00982.1-5"/>
    <property type="match status" value="1"/>
</dbReference>
<dbReference type="NCBIfam" id="NF009104">
    <property type="entry name" value="PRK12449.1"/>
    <property type="match status" value="1"/>
</dbReference>
<dbReference type="PANTHER" id="PTHR20863">
    <property type="entry name" value="ACYL CARRIER PROTEIN"/>
    <property type="match status" value="1"/>
</dbReference>
<dbReference type="PANTHER" id="PTHR20863:SF76">
    <property type="entry name" value="CARRIER DOMAIN-CONTAINING PROTEIN"/>
    <property type="match status" value="1"/>
</dbReference>
<dbReference type="Pfam" id="PF00550">
    <property type="entry name" value="PP-binding"/>
    <property type="match status" value="1"/>
</dbReference>
<dbReference type="SUPFAM" id="SSF47336">
    <property type="entry name" value="ACP-like"/>
    <property type="match status" value="1"/>
</dbReference>
<dbReference type="PROSITE" id="PS50075">
    <property type="entry name" value="CARRIER"/>
    <property type="match status" value="1"/>
</dbReference>
<dbReference type="PROSITE" id="PS00012">
    <property type="entry name" value="PHOSPHOPANTETHEINE"/>
    <property type="match status" value="1"/>
</dbReference>
<comment type="function">
    <text evidence="1">Carrier of the growing fatty acid chain in fatty acid biosynthesis.</text>
</comment>
<comment type="pathway">
    <text evidence="1">Lipid metabolism; fatty acid biosynthesis.</text>
</comment>
<comment type="subcellular location">
    <subcellularLocation>
        <location evidence="1">Cytoplasm</location>
    </subcellularLocation>
</comment>
<comment type="PTM">
    <text evidence="1">4'-phosphopantetheine is transferred from CoA to a specific serine of apo-ACP by AcpS. This modification is essential for activity because fatty acids are bound in thioester linkage to the sulfhydryl of the prosthetic group.</text>
</comment>
<comment type="similarity">
    <text evidence="1">Belongs to the acyl carrier protein (ACP) family.</text>
</comment>
<feature type="chain" id="PRO_1000066656" description="Acyl carrier protein">
    <location>
        <begin position="1"/>
        <end position="80"/>
    </location>
</feature>
<feature type="domain" description="Carrier" evidence="2">
    <location>
        <begin position="4"/>
        <end position="79"/>
    </location>
</feature>
<feature type="modified residue" description="O-(pantetheine 4'-phosphoryl)serine" evidence="2">
    <location>
        <position position="39"/>
    </location>
</feature>